<protein>
    <recommendedName>
        <fullName>CDGSH iron-sulfur domain-containing protein 2A</fullName>
    </recommendedName>
</protein>
<keyword id="KW-0001">2Fe-2S</keyword>
<keyword id="KW-0072">Autophagy</keyword>
<keyword id="KW-0256">Endoplasmic reticulum</keyword>
<keyword id="KW-0408">Iron</keyword>
<keyword id="KW-0411">Iron-sulfur</keyword>
<keyword id="KW-0472">Membrane</keyword>
<keyword id="KW-0479">Metal-binding</keyword>
<keyword id="KW-0496">Mitochondrion</keyword>
<keyword id="KW-1000">Mitochondrion outer membrane</keyword>
<keyword id="KW-0812">Transmembrane</keyword>
<keyword id="KW-1133">Transmembrane helix</keyword>
<gene>
    <name type="primary">cisd2a</name>
</gene>
<sequence length="135" mass="15515">MVLETISRIIKIQLPAYLKKLPLPETIGGFARLTVSDWLRLLPLLGILALLGYLTIRPFLPKKKKQKDSLINLEIQKENPKVVNEIDIEDLNRTNVCYCRCWRSKTFPVCDKSHIKHNELTGDNVGPLILKKKIL</sequence>
<evidence type="ECO:0000250" key="1"/>
<evidence type="ECO:0000255" key="2"/>
<evidence type="ECO:0000305" key="3"/>
<dbReference type="EMBL" id="BT074258">
    <property type="protein sequence ID" value="ACO08682.1"/>
    <property type="molecule type" value="mRNA"/>
</dbReference>
<dbReference type="SMR" id="C1BI29"/>
<dbReference type="Proteomes" id="UP000694395">
    <property type="component" value="Unplaced"/>
</dbReference>
<dbReference type="GO" id="GO:0005789">
    <property type="term" value="C:endoplasmic reticulum membrane"/>
    <property type="evidence" value="ECO:0000250"/>
    <property type="project" value="UniProtKB"/>
</dbReference>
<dbReference type="GO" id="GO:0005741">
    <property type="term" value="C:mitochondrial outer membrane"/>
    <property type="evidence" value="ECO:0000250"/>
    <property type="project" value="UniProtKB"/>
</dbReference>
<dbReference type="GO" id="GO:0051537">
    <property type="term" value="F:2 iron, 2 sulfur cluster binding"/>
    <property type="evidence" value="ECO:0000250"/>
    <property type="project" value="UniProtKB"/>
</dbReference>
<dbReference type="GO" id="GO:0046872">
    <property type="term" value="F:metal ion binding"/>
    <property type="evidence" value="ECO:0007669"/>
    <property type="project" value="UniProtKB-KW"/>
</dbReference>
<dbReference type="GO" id="GO:0042803">
    <property type="term" value="F:protein homodimerization activity"/>
    <property type="evidence" value="ECO:0000250"/>
    <property type="project" value="UniProtKB"/>
</dbReference>
<dbReference type="GO" id="GO:0000422">
    <property type="term" value="P:autophagy of mitochondrion"/>
    <property type="evidence" value="ECO:0000250"/>
    <property type="project" value="UniProtKB"/>
</dbReference>
<dbReference type="GO" id="GO:0010506">
    <property type="term" value="P:regulation of autophagy"/>
    <property type="evidence" value="ECO:0000250"/>
    <property type="project" value="UniProtKB"/>
</dbReference>
<dbReference type="FunFam" id="3.40.5.90:FF:000001">
    <property type="entry name" value="CDGSH iron-sulfur domain-containing protein 1"/>
    <property type="match status" value="1"/>
</dbReference>
<dbReference type="Gene3D" id="3.40.5.90">
    <property type="entry name" value="CDGSH iron-sulfur domain, mitoNEET-type"/>
    <property type="match status" value="1"/>
</dbReference>
<dbReference type="InterPro" id="IPR045131">
    <property type="entry name" value="CISD1/2"/>
</dbReference>
<dbReference type="InterPro" id="IPR018967">
    <property type="entry name" value="FeS-contain_CDGSH-typ"/>
</dbReference>
<dbReference type="InterPro" id="IPR019610">
    <property type="entry name" value="FeS-contain_mitoNEET_N"/>
</dbReference>
<dbReference type="InterPro" id="IPR042216">
    <property type="entry name" value="MitoNEET_CISD"/>
</dbReference>
<dbReference type="PANTHER" id="PTHR13680">
    <property type="entry name" value="CDGSH IRON-SULFUR DOMAIN-CONTAINING PROTEIN 1"/>
    <property type="match status" value="1"/>
</dbReference>
<dbReference type="PANTHER" id="PTHR13680:SF33">
    <property type="entry name" value="CDGSH IRON-SULFUR DOMAIN-CONTAINING PROTEIN 2"/>
    <property type="match status" value="1"/>
</dbReference>
<dbReference type="Pfam" id="PF10660">
    <property type="entry name" value="MitoNEET_N"/>
    <property type="match status" value="1"/>
</dbReference>
<dbReference type="Pfam" id="PF09360">
    <property type="entry name" value="zf-CDGSH"/>
    <property type="match status" value="1"/>
</dbReference>
<dbReference type="SMART" id="SM00704">
    <property type="entry name" value="ZnF_CDGSH"/>
    <property type="match status" value="1"/>
</dbReference>
<comment type="function">
    <text evidence="1">Regulator of autophagy that contributes to antagonize becn1-mediated cellular autophagy at the endoplasmic reticulum. Participates in the interaction of bcl2 with becn1 and is required for bcl2-mediated depression of endoplasmic reticulum Ca(2+) stores during autophagy (By similarity).</text>
</comment>
<comment type="cofactor">
    <cofactor evidence="1">
        <name>[2Fe-2S] cluster</name>
        <dbReference type="ChEBI" id="CHEBI:190135"/>
    </cofactor>
    <text evidence="1">Binds 1 [2Fe-2S] cluster.</text>
</comment>
<comment type="subunit">
    <text evidence="1">Homodimer.</text>
</comment>
<comment type="subcellular location">
    <subcellularLocation>
        <location evidence="1">Endoplasmic reticulum membrane</location>
        <topology evidence="1">Single-pass membrane protein</topology>
    </subcellularLocation>
    <subcellularLocation>
        <location evidence="1">Mitochondrion outer membrane</location>
        <topology evidence="1">Single-pass membrane protein</topology>
    </subcellularLocation>
</comment>
<comment type="similarity">
    <text evidence="3">Belongs to the CISD protein family. CISD2 subfamily.</text>
</comment>
<name>CID2A_ONCMY</name>
<reference key="1">
    <citation type="submission" date="2009-03" db="EMBL/GenBank/DDBJ databases">
        <title>Oncorhynchus mykiss ESTs and full-length cDNAs from White Blood Cells.</title>
        <authorList>
            <person name="Yasuike M."/>
            <person name="von Schalburg K."/>
            <person name="Cooper G."/>
            <person name="Leong J."/>
            <person name="Davidson W.S."/>
            <person name="Koop B.F."/>
        </authorList>
    </citation>
    <scope>NUCLEOTIDE SEQUENCE [LARGE SCALE MRNA]</scope>
    <source>
        <tissue>Leukocyte</tissue>
    </source>
</reference>
<organism>
    <name type="scientific">Oncorhynchus mykiss</name>
    <name type="common">Rainbow trout</name>
    <name type="synonym">Salmo gairdneri</name>
    <dbReference type="NCBI Taxonomy" id="8022"/>
    <lineage>
        <taxon>Eukaryota</taxon>
        <taxon>Metazoa</taxon>
        <taxon>Chordata</taxon>
        <taxon>Craniata</taxon>
        <taxon>Vertebrata</taxon>
        <taxon>Euteleostomi</taxon>
        <taxon>Actinopterygii</taxon>
        <taxon>Neopterygii</taxon>
        <taxon>Teleostei</taxon>
        <taxon>Protacanthopterygii</taxon>
        <taxon>Salmoniformes</taxon>
        <taxon>Salmonidae</taxon>
        <taxon>Salmoninae</taxon>
        <taxon>Oncorhynchus</taxon>
    </lineage>
</organism>
<accession>C1BI29</accession>
<feature type="chain" id="PRO_0000392016" description="CDGSH iron-sulfur domain-containing protein 2A">
    <location>
        <begin position="1"/>
        <end position="135"/>
    </location>
</feature>
<feature type="topological domain" description="Lumenal" evidence="2">
    <location>
        <begin position="1"/>
        <end position="37"/>
    </location>
</feature>
<feature type="transmembrane region" description="Helical" evidence="2">
    <location>
        <begin position="38"/>
        <end position="60"/>
    </location>
</feature>
<feature type="topological domain" description="Cytoplasmic" evidence="2">
    <location>
        <begin position="61"/>
        <end position="135"/>
    </location>
</feature>
<feature type="binding site" evidence="1">
    <location>
        <position position="99"/>
    </location>
    <ligand>
        <name>[2Fe-2S] cluster</name>
        <dbReference type="ChEBI" id="CHEBI:190135"/>
    </ligand>
</feature>
<feature type="binding site" evidence="1">
    <location>
        <position position="101"/>
    </location>
    <ligand>
        <name>[2Fe-2S] cluster</name>
        <dbReference type="ChEBI" id="CHEBI:190135"/>
    </ligand>
</feature>
<feature type="binding site" evidence="1">
    <location>
        <position position="110"/>
    </location>
    <ligand>
        <name>[2Fe-2S] cluster</name>
        <dbReference type="ChEBI" id="CHEBI:190135"/>
    </ligand>
</feature>
<feature type="binding site" evidence="1">
    <location>
        <position position="114"/>
    </location>
    <ligand>
        <name>[2Fe-2S] cluster</name>
        <dbReference type="ChEBI" id="CHEBI:190135"/>
    </ligand>
</feature>
<proteinExistence type="evidence at transcript level"/>